<evidence type="ECO:0000269" key="1">
    <source>
    </source>
</evidence>
<evidence type="ECO:0000303" key="2">
    <source>
    </source>
</evidence>
<evidence type="ECO:0000305" key="3"/>
<evidence type="ECO:0000305" key="4">
    <source>
    </source>
</evidence>
<reference key="1">
    <citation type="journal article" date="1998" name="Nature">
        <title>Deciphering the biology of Mycobacterium tuberculosis from the complete genome sequence.</title>
        <authorList>
            <person name="Cole S.T."/>
            <person name="Brosch R."/>
            <person name="Parkhill J."/>
            <person name="Garnier T."/>
            <person name="Churcher C.M."/>
            <person name="Harris D.E."/>
            <person name="Gordon S.V."/>
            <person name="Eiglmeier K."/>
            <person name="Gas S."/>
            <person name="Barry C.E. III"/>
            <person name="Tekaia F."/>
            <person name="Badcock K."/>
            <person name="Basham D."/>
            <person name="Brown D."/>
            <person name="Chillingworth T."/>
            <person name="Connor R."/>
            <person name="Davies R.M."/>
            <person name="Devlin K."/>
            <person name="Feltwell T."/>
            <person name="Gentles S."/>
            <person name="Hamlin N."/>
            <person name="Holroyd S."/>
            <person name="Hornsby T."/>
            <person name="Jagels K."/>
            <person name="Krogh A."/>
            <person name="McLean J."/>
            <person name="Moule S."/>
            <person name="Murphy L.D."/>
            <person name="Oliver S."/>
            <person name="Osborne J."/>
            <person name="Quail M.A."/>
            <person name="Rajandream M.A."/>
            <person name="Rogers J."/>
            <person name="Rutter S."/>
            <person name="Seeger K."/>
            <person name="Skelton S."/>
            <person name="Squares S."/>
            <person name="Squares R."/>
            <person name="Sulston J.E."/>
            <person name="Taylor K."/>
            <person name="Whitehead S."/>
            <person name="Barrell B.G."/>
        </authorList>
    </citation>
    <scope>NUCLEOTIDE SEQUENCE [LARGE SCALE GENOMIC DNA]</scope>
    <source>
        <strain>ATCC 25618 / H37Rv</strain>
    </source>
</reference>
<reference key="2">
    <citation type="journal article" date="2009" name="PLoS Pathog.">
        <title>Systematic genetic nomenclature for type VII secretion systems.</title>
        <authorList>
            <person name="Bitter W."/>
            <person name="Houben E.N."/>
            <person name="Bottai D."/>
            <person name="Brodin P."/>
            <person name="Brown E.J."/>
            <person name="Cox J.S."/>
            <person name="Derbyshire K."/>
            <person name="Fortune S.M."/>
            <person name="Gao L.Y."/>
            <person name="Liu J."/>
            <person name="Gey van Pittius N.C."/>
            <person name="Pym A.S."/>
            <person name="Rubin E.J."/>
            <person name="Sherman D.R."/>
            <person name="Cole S.T."/>
            <person name="Brosch R."/>
        </authorList>
    </citation>
    <scope>NOMENCLATURE</scope>
</reference>
<reference key="3">
    <citation type="journal article" date="2010" name="FEBS Lett.">
        <title>Stoichiometric protein complex formation and over-expression using the prokaryotic native operon structure.</title>
        <authorList>
            <person name="Poulsen C."/>
            <person name="Holton S."/>
            <person name="Geerlof A."/>
            <person name="Wilmanns M."/>
            <person name="Song Y.H."/>
        </authorList>
    </citation>
    <scope>SUBUNIT</scope>
    <source>
        <strain>ATCC 25618 / H37Rv</strain>
    </source>
</reference>
<reference key="4">
    <citation type="journal article" date="2011" name="Mol. Cell. Proteomics">
        <title>Proteogenomic analysis of Mycobacterium tuberculosis by high resolution mass spectrometry.</title>
        <authorList>
            <person name="Kelkar D.S."/>
            <person name="Kumar D."/>
            <person name="Kumar P."/>
            <person name="Balakrishnan L."/>
            <person name="Muthusamy B."/>
            <person name="Yadav A.K."/>
            <person name="Shrivastava P."/>
            <person name="Marimuthu A."/>
            <person name="Anand S."/>
            <person name="Sundaram H."/>
            <person name="Kingsbury R."/>
            <person name="Harsha H.C."/>
            <person name="Nair B."/>
            <person name="Prasad T.S."/>
            <person name="Chauhan D.S."/>
            <person name="Katoch K."/>
            <person name="Katoch V.M."/>
            <person name="Kumar P."/>
            <person name="Chaerkady R."/>
            <person name="Ramachandran S."/>
            <person name="Dash D."/>
            <person name="Pandey A."/>
        </authorList>
    </citation>
    <scope>IDENTIFICATION BY MASS SPECTROMETRY [LARGE SCALE ANALYSIS]</scope>
    <source>
        <strain>ATCC 25618 / H37Rv</strain>
    </source>
</reference>
<keyword id="KW-1185">Reference proteome</keyword>
<keyword id="KW-0964">Secreted</keyword>
<accession>P9WNH7</accession>
<accession>L0TE47</accession>
<accession>O05440</accession>
<dbReference type="EMBL" id="AL123456">
    <property type="protein sequence ID" value="CCP46734.1"/>
    <property type="molecule type" value="Genomic_DNA"/>
</dbReference>
<dbReference type="PIR" id="B70600">
    <property type="entry name" value="B70600"/>
</dbReference>
<dbReference type="RefSeq" id="NP_218422.1">
    <property type="nucleotide sequence ID" value="NC_000962.3"/>
</dbReference>
<dbReference type="RefSeq" id="WP_003400100.1">
    <property type="nucleotide sequence ID" value="NZ_NVQJ01000005.1"/>
</dbReference>
<dbReference type="SMR" id="P9WNH7"/>
<dbReference type="STRING" id="83332.Rv3905c"/>
<dbReference type="PaxDb" id="83332-Rv3905c"/>
<dbReference type="DNASU" id="886239"/>
<dbReference type="GeneID" id="45427905"/>
<dbReference type="GeneID" id="886239"/>
<dbReference type="KEGG" id="mtu:Rv3905c"/>
<dbReference type="KEGG" id="mtv:RVBD_3905c"/>
<dbReference type="TubercuList" id="Rv3905c"/>
<dbReference type="eggNOG" id="COG4842">
    <property type="taxonomic scope" value="Bacteria"/>
</dbReference>
<dbReference type="InParanoid" id="P9WNH7"/>
<dbReference type="OrthoDB" id="3787781at2"/>
<dbReference type="Proteomes" id="UP000001584">
    <property type="component" value="Chromosome"/>
</dbReference>
<dbReference type="GO" id="GO:0005576">
    <property type="term" value="C:extracellular region"/>
    <property type="evidence" value="ECO:0007669"/>
    <property type="project" value="UniProtKB-SubCell"/>
</dbReference>
<dbReference type="Gene3D" id="1.10.287.1060">
    <property type="entry name" value="ESAT-6-like"/>
    <property type="match status" value="1"/>
</dbReference>
<dbReference type="InterPro" id="IPR036689">
    <property type="entry name" value="ESAT-6-like_sf"/>
</dbReference>
<dbReference type="InterPro" id="IPR010310">
    <property type="entry name" value="T7SS_ESAT-6-like"/>
</dbReference>
<dbReference type="NCBIfam" id="TIGR03930">
    <property type="entry name" value="WXG100_ESAT6"/>
    <property type="match status" value="1"/>
</dbReference>
<dbReference type="Pfam" id="PF06013">
    <property type="entry name" value="WXG100"/>
    <property type="match status" value="1"/>
</dbReference>
<dbReference type="SUPFAM" id="SSF140453">
    <property type="entry name" value="EsxAB dimer-like"/>
    <property type="match status" value="1"/>
</dbReference>
<sequence>MGADDTLRVEPAVMQGFAASLDGAAEHLAVQLAELDAQVGQMLGGWRGASGSAYGSAWELWHRGAGEVQLGLSMLAAAIAHAGAGYQHNETASAQVLREVGGG</sequence>
<feature type="chain" id="PRO_0000167820" description="ESAT-6-like protein EsxF">
    <location>
        <begin position="1"/>
        <end position="103"/>
    </location>
</feature>
<name>ESXF_MYCTU</name>
<gene>
    <name evidence="2" type="primary">esxF</name>
    <name type="ordered locus">Rv3905c</name>
    <name type="ORF">MTCY15F10.06</name>
</gene>
<protein>
    <recommendedName>
        <fullName evidence="3">ESAT-6-like protein EsxF</fullName>
    </recommendedName>
</protein>
<comment type="subunit">
    <text evidence="1">Forms a tight 1:1 complex with EsxE (PubMed:20085764).</text>
</comment>
<comment type="subcellular location">
    <subcellularLocation>
        <location evidence="4">Secreted</location>
    </subcellularLocation>
    <text evidence="4">Probably secreted via the ESX / type VII secretion system (T7SS).</text>
</comment>
<comment type="similarity">
    <text evidence="4">Belongs to the WXG100 family. CFP-10 subfamily.</text>
</comment>
<organism>
    <name type="scientific">Mycobacterium tuberculosis (strain ATCC 25618 / H37Rv)</name>
    <dbReference type="NCBI Taxonomy" id="83332"/>
    <lineage>
        <taxon>Bacteria</taxon>
        <taxon>Bacillati</taxon>
        <taxon>Actinomycetota</taxon>
        <taxon>Actinomycetes</taxon>
        <taxon>Mycobacteriales</taxon>
        <taxon>Mycobacteriaceae</taxon>
        <taxon>Mycobacterium</taxon>
        <taxon>Mycobacterium tuberculosis complex</taxon>
    </lineage>
</organism>
<proteinExistence type="evidence at protein level"/>